<reference key="1">
    <citation type="journal article" date="1994" name="Mol. Cell. Biol.">
        <title>The GTS1 gene, which contains a Gly-Thr repeat, affects the timing of budding and cell size of the yeast Saccharomyces cerevisiae.</title>
        <authorList>
            <person name="Mitsui K."/>
            <person name="Yaguchi S."/>
            <person name="Tsurugi K."/>
        </authorList>
    </citation>
    <scope>NUCLEOTIDE SEQUENCE [GENOMIC DNA]</scope>
    <source>
        <strain>IFO 10151 / YNN140</strain>
    </source>
</reference>
<reference key="2">
    <citation type="submission" date="1996-07" db="EMBL/GenBank/DDBJ databases">
        <authorList>
            <person name="Mitsui K."/>
        </authorList>
    </citation>
    <scope>SEQUENCE REVISION</scope>
</reference>
<reference key="3">
    <citation type="journal article" date="1997" name="Yeast">
        <title>Constitutive flocculation in Saccharomyces cerevisiae through overexpression of the GTS1 gene, coding for a 'Glo'-type Zn-finger-containing protein.</title>
        <authorList>
            <person name="Bossier P.G.M."/>
            <person name="Goethal P."/>
            <person name="Rodrigues-Pousada C."/>
        </authorList>
    </citation>
    <scope>NUCLEOTIDE SEQUENCE [GENOMIC DNA]</scope>
    <source>
        <strain>ATCC 44827 / SKQ2N</strain>
    </source>
</reference>
<reference key="4">
    <citation type="journal article" date="1997" name="Yeast">
        <title>Sequencing of a 40.5 kb fragment located on the left arm of chromosome VII from Saccharomyces cerevisiae.</title>
        <authorList>
            <person name="Coglievina M."/>
            <person name="Klima R."/>
            <person name="Bertani I."/>
            <person name="Delneri D."/>
            <person name="Zaccaria P."/>
            <person name="Bruschi C.V."/>
        </authorList>
    </citation>
    <scope>NUCLEOTIDE SEQUENCE [GENOMIC DNA]</scope>
    <source>
        <strain>ATCC 96604 / S288c / FY1679</strain>
    </source>
</reference>
<reference key="5">
    <citation type="journal article" date="1997" name="Nature">
        <title>The nucleotide sequence of Saccharomyces cerevisiae chromosome VII.</title>
        <authorList>
            <person name="Tettelin H."/>
            <person name="Agostoni-Carbone M.L."/>
            <person name="Albermann K."/>
            <person name="Albers M."/>
            <person name="Arroyo J."/>
            <person name="Backes U."/>
            <person name="Barreiros T."/>
            <person name="Bertani I."/>
            <person name="Bjourson A.J."/>
            <person name="Brueckner M."/>
            <person name="Bruschi C.V."/>
            <person name="Carignani G."/>
            <person name="Castagnoli L."/>
            <person name="Cerdan E."/>
            <person name="Clemente M.L."/>
            <person name="Coblenz A."/>
            <person name="Coglievina M."/>
            <person name="Coissac E."/>
            <person name="Defoor E."/>
            <person name="Del Bino S."/>
            <person name="Delius H."/>
            <person name="Delneri D."/>
            <person name="de Wergifosse P."/>
            <person name="Dujon B."/>
            <person name="Durand P."/>
            <person name="Entian K.-D."/>
            <person name="Eraso P."/>
            <person name="Escribano V."/>
            <person name="Fabiani L."/>
            <person name="Fartmann B."/>
            <person name="Feroli F."/>
            <person name="Feuermann M."/>
            <person name="Frontali L."/>
            <person name="Garcia-Gonzalez M."/>
            <person name="Garcia-Saez M.I."/>
            <person name="Goffeau A."/>
            <person name="Guerreiro P."/>
            <person name="Hani J."/>
            <person name="Hansen M."/>
            <person name="Hebling U."/>
            <person name="Hernandez K."/>
            <person name="Heumann K."/>
            <person name="Hilger F."/>
            <person name="Hofmann B."/>
            <person name="Indge K.J."/>
            <person name="James C.M."/>
            <person name="Klima R."/>
            <person name="Koetter P."/>
            <person name="Kramer B."/>
            <person name="Kramer W."/>
            <person name="Lauquin G."/>
            <person name="Leuther H."/>
            <person name="Louis E.J."/>
            <person name="Maillier E."/>
            <person name="Marconi A."/>
            <person name="Martegani E."/>
            <person name="Mazon M.J."/>
            <person name="Mazzoni C."/>
            <person name="McReynolds A.D.K."/>
            <person name="Melchioretto P."/>
            <person name="Mewes H.-W."/>
            <person name="Minenkova O."/>
            <person name="Mueller-Auer S."/>
            <person name="Nawrocki A."/>
            <person name="Netter P."/>
            <person name="Neu R."/>
            <person name="Nombela C."/>
            <person name="Oliver S.G."/>
            <person name="Panzeri L."/>
            <person name="Paoluzi S."/>
            <person name="Plevani P."/>
            <person name="Portetelle D."/>
            <person name="Portillo F."/>
            <person name="Potier S."/>
            <person name="Purnelle B."/>
            <person name="Rieger M."/>
            <person name="Riles L."/>
            <person name="Rinaldi T."/>
            <person name="Robben J."/>
            <person name="Rodrigues-Pousada C."/>
            <person name="Rodriguez-Belmonte E."/>
            <person name="Rodriguez-Torres A.M."/>
            <person name="Rose M."/>
            <person name="Ruzzi M."/>
            <person name="Saliola M."/>
            <person name="Sanchez-Perez M."/>
            <person name="Schaefer B."/>
            <person name="Schaefer M."/>
            <person name="Scharfe M."/>
            <person name="Schmidheini T."/>
            <person name="Schreer A."/>
            <person name="Skala J."/>
            <person name="Souciet J.-L."/>
            <person name="Steensma H.Y."/>
            <person name="Talla E."/>
            <person name="Thierry A."/>
            <person name="Vandenbol M."/>
            <person name="van der Aart Q.J.M."/>
            <person name="Van Dyck L."/>
            <person name="Vanoni M."/>
            <person name="Verhasselt P."/>
            <person name="Voet M."/>
            <person name="Volckaert G."/>
            <person name="Wambutt R."/>
            <person name="Watson M.D."/>
            <person name="Weber N."/>
            <person name="Wedler E."/>
            <person name="Wedler H."/>
            <person name="Wipfli P."/>
            <person name="Wolf K."/>
            <person name="Wright L.F."/>
            <person name="Zaccaria P."/>
            <person name="Zimmermann M."/>
            <person name="Zollner A."/>
            <person name="Kleine K."/>
        </authorList>
    </citation>
    <scope>NUCLEOTIDE SEQUENCE [LARGE SCALE GENOMIC DNA]</scope>
    <source>
        <strain>ATCC 204508 / S288c</strain>
    </source>
</reference>
<reference key="6">
    <citation type="journal article" date="2014" name="G3 (Bethesda)">
        <title>The reference genome sequence of Saccharomyces cerevisiae: Then and now.</title>
        <authorList>
            <person name="Engel S.R."/>
            <person name="Dietrich F.S."/>
            <person name="Fisk D.G."/>
            <person name="Binkley G."/>
            <person name="Balakrishnan R."/>
            <person name="Costanzo M.C."/>
            <person name="Dwight S.S."/>
            <person name="Hitz B.C."/>
            <person name="Karra K."/>
            <person name="Nash R.S."/>
            <person name="Weng S."/>
            <person name="Wong E.D."/>
            <person name="Lloyd P."/>
            <person name="Skrzypek M.S."/>
            <person name="Miyasato S.R."/>
            <person name="Simison M."/>
            <person name="Cherry J.M."/>
        </authorList>
    </citation>
    <scope>GENOME REANNOTATION</scope>
    <source>
        <strain>ATCC 204508 / S288c</strain>
    </source>
</reference>
<reference key="7">
    <citation type="journal article" date="2003" name="Nature">
        <title>Global analysis of protein expression in yeast.</title>
        <authorList>
            <person name="Ghaemmaghami S."/>
            <person name="Huh W.-K."/>
            <person name="Bower K."/>
            <person name="Howson R.W."/>
            <person name="Belle A."/>
            <person name="Dephoure N."/>
            <person name="O'Shea E.K."/>
            <person name="Weissman J.S."/>
        </authorList>
    </citation>
    <scope>LEVEL OF PROTEIN EXPRESSION [LARGE SCALE ANALYSIS]</scope>
</reference>
<reference key="8">
    <citation type="journal article" date="2007" name="J. Proteome Res.">
        <title>Large-scale phosphorylation analysis of alpha-factor-arrested Saccharomyces cerevisiae.</title>
        <authorList>
            <person name="Li X."/>
            <person name="Gerber S.A."/>
            <person name="Rudner A.D."/>
            <person name="Beausoleil S.A."/>
            <person name="Haas W."/>
            <person name="Villen J."/>
            <person name="Elias J.E."/>
            <person name="Gygi S.P."/>
        </authorList>
    </citation>
    <scope>IDENTIFICATION BY MASS SPECTROMETRY [LARGE SCALE ANALYSIS]</scope>
    <source>
        <strain>ADR376</strain>
    </source>
</reference>
<reference key="9">
    <citation type="journal article" date="2007" name="Proc. Natl. Acad. Sci. U.S.A.">
        <title>Analysis of phosphorylation sites on proteins from Saccharomyces cerevisiae by electron transfer dissociation (ETD) mass spectrometry.</title>
        <authorList>
            <person name="Chi A."/>
            <person name="Huttenhower C."/>
            <person name="Geer L.Y."/>
            <person name="Coon J.J."/>
            <person name="Syka J.E.P."/>
            <person name="Bai D.L."/>
            <person name="Shabanowitz J."/>
            <person name="Burke D.J."/>
            <person name="Troyanskaya O.G."/>
            <person name="Hunt D.F."/>
        </authorList>
    </citation>
    <scope>PHOSPHORYLATION [LARGE SCALE ANALYSIS] AT SER-184</scope>
    <scope>IDENTIFICATION BY MASS SPECTROMETRY [LARGE SCALE ANALYSIS]</scope>
</reference>
<reference key="10">
    <citation type="journal article" date="2008" name="Mol. Cell. Proteomics">
        <title>A multidimensional chromatography technology for in-depth phosphoproteome analysis.</title>
        <authorList>
            <person name="Albuquerque C.P."/>
            <person name="Smolka M.B."/>
            <person name="Payne S.H."/>
            <person name="Bafna V."/>
            <person name="Eng J."/>
            <person name="Zhou H."/>
        </authorList>
    </citation>
    <scope>PHOSPHORYLATION [LARGE SCALE ANALYSIS] AT SER-153</scope>
    <scope>IDENTIFICATION BY MASS SPECTROMETRY [LARGE SCALE ANALYSIS]</scope>
</reference>
<reference key="11">
    <citation type="journal article" date="2009" name="Science">
        <title>Global analysis of Cdk1 substrate phosphorylation sites provides insights into evolution.</title>
        <authorList>
            <person name="Holt L.J."/>
            <person name="Tuch B.B."/>
            <person name="Villen J."/>
            <person name="Johnson A.D."/>
            <person name="Gygi S.P."/>
            <person name="Morgan D.O."/>
        </authorList>
    </citation>
    <scope>PHOSPHORYLATION [LARGE SCALE ANALYSIS] AT SER-153; TYR-181; SER-187; SER-240 AND THR-249</scope>
    <scope>IDENTIFICATION BY MASS SPECTROMETRY [LARGE SCALE ANALYSIS]</scope>
</reference>
<gene>
    <name type="primary">GTS1</name>
    <name type="synonym">LSR1</name>
    <name type="ordered locus">YGL181W</name>
</gene>
<proteinExistence type="evidence at protein level"/>
<sequence length="396" mass="44407">MRFRSSSHSLKHVDRELKELINSSENANKCGECGNFYPTWCSVNLGVFLCGRCASVHRKVFGSRDDDAFSNVKSLSMDRWTREDIDELVSLGGNKGNARFWNPKNVPFPFDGDDDKAIVEHYIRDKYILGKFRYDEIKPEDFGSRMDDFDGESDRFDERNRSRSRSRSHSFYKGGHNRSDYGGSRDSFQSSGSRYSRQLAELKDMGFGDTNKNLDALSSAHGNINRAIDYLEKSSSSRNSVSAAATTSTPPLPRRRATTSGPQPAIFDGTNVITPDFTSNSASFVQAKPAVFDGTLQQYYDPATGMIYVDQQQYAMAMQQQQQQQQQLAVAQAQAQAQAQAQAQVQAQAQAQAQAQAQAQQIQMQQLQMQQQQQAPLSFQQMSQGGNLPQGYFYTQ</sequence>
<keyword id="KW-0479">Metal-binding</keyword>
<keyword id="KW-0539">Nucleus</keyword>
<keyword id="KW-0597">Phosphoprotein</keyword>
<keyword id="KW-1185">Reference proteome</keyword>
<keyword id="KW-0804">Transcription</keyword>
<keyword id="KW-0805">Transcription regulation</keyword>
<keyword id="KW-0862">Zinc</keyword>
<keyword id="KW-0863">Zinc-finger</keyword>
<dbReference type="EMBL" id="D31853">
    <property type="protein sequence ID" value="BAA06637.1"/>
    <property type="molecule type" value="Genomic_DNA"/>
</dbReference>
<dbReference type="EMBL" id="X85806">
    <property type="protein sequence ID" value="CAA59801.1"/>
    <property type="molecule type" value="Genomic_DNA"/>
</dbReference>
<dbReference type="EMBL" id="X91489">
    <property type="protein sequence ID" value="CAA62793.1"/>
    <property type="molecule type" value="Genomic_DNA"/>
</dbReference>
<dbReference type="EMBL" id="Z72703">
    <property type="protein sequence ID" value="CAA96893.1"/>
    <property type="molecule type" value="Genomic_DNA"/>
</dbReference>
<dbReference type="EMBL" id="BK006941">
    <property type="protein sequence ID" value="DAA07933.1"/>
    <property type="molecule type" value="Genomic_DNA"/>
</dbReference>
<dbReference type="PIR" id="S58223">
    <property type="entry name" value="S58223"/>
</dbReference>
<dbReference type="RefSeq" id="NP_011334.1">
    <property type="nucleotide sequence ID" value="NM_001181046.1"/>
</dbReference>
<dbReference type="SMR" id="P40956"/>
<dbReference type="BioGRID" id="33073">
    <property type="interactions" value="118"/>
</dbReference>
<dbReference type="DIP" id="DIP-2746N"/>
<dbReference type="FunCoup" id="P40956">
    <property type="interactions" value="135"/>
</dbReference>
<dbReference type="IntAct" id="P40956">
    <property type="interactions" value="44"/>
</dbReference>
<dbReference type="MINT" id="P40956"/>
<dbReference type="STRING" id="4932.YGL181W"/>
<dbReference type="GlyGen" id="P40956">
    <property type="glycosylation" value="3 sites, 1 O-linked glycan (3 sites)"/>
</dbReference>
<dbReference type="iPTMnet" id="P40956"/>
<dbReference type="PaxDb" id="4932-YGL181W"/>
<dbReference type="PeptideAtlas" id="P40956"/>
<dbReference type="EnsemblFungi" id="YGL181W_mRNA">
    <property type="protein sequence ID" value="YGL181W"/>
    <property type="gene ID" value="YGL181W"/>
</dbReference>
<dbReference type="GeneID" id="852694"/>
<dbReference type="KEGG" id="sce:YGL181W"/>
<dbReference type="AGR" id="SGD:S000003149"/>
<dbReference type="SGD" id="S000003149">
    <property type="gene designation" value="GTS1"/>
</dbReference>
<dbReference type="VEuPathDB" id="FungiDB:YGL181W"/>
<dbReference type="eggNOG" id="KOG0703">
    <property type="taxonomic scope" value="Eukaryota"/>
</dbReference>
<dbReference type="HOGENOM" id="CLU_031494_1_0_1"/>
<dbReference type="InParanoid" id="P40956"/>
<dbReference type="OMA" id="ASWNMGI"/>
<dbReference type="OrthoDB" id="10266696at2759"/>
<dbReference type="BioCyc" id="YEAST:G3O-30668-MONOMER"/>
<dbReference type="BioGRID-ORCS" id="852694">
    <property type="hits" value="2 hits in 10 CRISPR screens"/>
</dbReference>
<dbReference type="ChiTaRS" id="LSR1">
    <property type="organism name" value="yeast"/>
</dbReference>
<dbReference type="PRO" id="PR:P40956"/>
<dbReference type="Proteomes" id="UP000002311">
    <property type="component" value="Chromosome VII"/>
</dbReference>
<dbReference type="RNAct" id="P40956">
    <property type="molecule type" value="protein"/>
</dbReference>
<dbReference type="GO" id="GO:0030479">
    <property type="term" value="C:actin cortical patch"/>
    <property type="evidence" value="ECO:0000314"/>
    <property type="project" value="SGD"/>
</dbReference>
<dbReference type="GO" id="GO:0005935">
    <property type="term" value="C:cellular bud neck"/>
    <property type="evidence" value="ECO:0007005"/>
    <property type="project" value="SGD"/>
</dbReference>
<dbReference type="GO" id="GO:0005737">
    <property type="term" value="C:cytoplasm"/>
    <property type="evidence" value="ECO:0000318"/>
    <property type="project" value="GO_Central"/>
</dbReference>
<dbReference type="GO" id="GO:0005634">
    <property type="term" value="C:nucleus"/>
    <property type="evidence" value="ECO:0000314"/>
    <property type="project" value="SGD"/>
</dbReference>
<dbReference type="GO" id="GO:0140297">
    <property type="term" value="F:DNA-binding transcription factor binding"/>
    <property type="evidence" value="ECO:0000353"/>
    <property type="project" value="SGD"/>
</dbReference>
<dbReference type="GO" id="GO:0005096">
    <property type="term" value="F:GTPase activator activity"/>
    <property type="evidence" value="ECO:0000315"/>
    <property type="project" value="SGD"/>
</dbReference>
<dbReference type="GO" id="GO:0008270">
    <property type="term" value="F:zinc ion binding"/>
    <property type="evidence" value="ECO:0007669"/>
    <property type="project" value="UniProtKB-KW"/>
</dbReference>
<dbReference type="GO" id="GO:0006897">
    <property type="term" value="P:endocytosis"/>
    <property type="evidence" value="ECO:0000315"/>
    <property type="project" value="SGD"/>
</dbReference>
<dbReference type="GO" id="GO:0010512">
    <property type="term" value="P:negative regulation of phosphatidylinositol biosynthetic process"/>
    <property type="evidence" value="ECO:0000315"/>
    <property type="project" value="SGD"/>
</dbReference>
<dbReference type="GO" id="GO:0045944">
    <property type="term" value="P:positive regulation of transcription by RNA polymerase II"/>
    <property type="evidence" value="ECO:0000315"/>
    <property type="project" value="SGD"/>
</dbReference>
<dbReference type="GO" id="GO:0006357">
    <property type="term" value="P:regulation of transcription by RNA polymerase II"/>
    <property type="evidence" value="ECO:0000353"/>
    <property type="project" value="SGD"/>
</dbReference>
<dbReference type="CDD" id="cd14400">
    <property type="entry name" value="UBA_Gts1p_like"/>
    <property type="match status" value="1"/>
</dbReference>
<dbReference type="FunFam" id="1.10.220.150:FF:000027">
    <property type="entry name" value="Gts1p"/>
    <property type="match status" value="1"/>
</dbReference>
<dbReference type="FunFam" id="1.10.8.10:FF:000079">
    <property type="entry name" value="Ubiquitin family protein"/>
    <property type="match status" value="1"/>
</dbReference>
<dbReference type="Gene3D" id="1.10.220.150">
    <property type="entry name" value="Arf GTPase activating protein"/>
    <property type="match status" value="1"/>
</dbReference>
<dbReference type="Gene3D" id="1.10.8.10">
    <property type="entry name" value="DNA helicase RuvA subunit, C-terminal domain"/>
    <property type="match status" value="1"/>
</dbReference>
<dbReference type="InterPro" id="IPR051718">
    <property type="entry name" value="ARF_GTPase-activating"/>
</dbReference>
<dbReference type="InterPro" id="IPR037278">
    <property type="entry name" value="ARFGAP/RecO"/>
</dbReference>
<dbReference type="InterPro" id="IPR001164">
    <property type="entry name" value="ArfGAP_dom"/>
</dbReference>
<dbReference type="InterPro" id="IPR038508">
    <property type="entry name" value="ArfGAP_dom_sf"/>
</dbReference>
<dbReference type="InterPro" id="IPR015940">
    <property type="entry name" value="UBA"/>
</dbReference>
<dbReference type="InterPro" id="IPR009060">
    <property type="entry name" value="UBA-like_sf"/>
</dbReference>
<dbReference type="PANTHER" id="PTHR45705">
    <property type="entry name" value="FI20236P1"/>
    <property type="match status" value="1"/>
</dbReference>
<dbReference type="PANTHER" id="PTHR45705:SF9">
    <property type="entry name" value="PROTEIN GTS1"/>
    <property type="match status" value="1"/>
</dbReference>
<dbReference type="Pfam" id="PF01412">
    <property type="entry name" value="ArfGap"/>
    <property type="match status" value="1"/>
</dbReference>
<dbReference type="Pfam" id="PF00627">
    <property type="entry name" value="UBA"/>
    <property type="match status" value="1"/>
</dbReference>
<dbReference type="PRINTS" id="PR00405">
    <property type="entry name" value="REVINTRACTNG"/>
</dbReference>
<dbReference type="SMART" id="SM00105">
    <property type="entry name" value="ArfGap"/>
    <property type="match status" value="1"/>
</dbReference>
<dbReference type="SMART" id="SM00165">
    <property type="entry name" value="UBA"/>
    <property type="match status" value="1"/>
</dbReference>
<dbReference type="SUPFAM" id="SSF57863">
    <property type="entry name" value="ArfGap/RecO-like zinc finger"/>
    <property type="match status" value="1"/>
</dbReference>
<dbReference type="SUPFAM" id="SSF46934">
    <property type="entry name" value="UBA-like"/>
    <property type="match status" value="1"/>
</dbReference>
<dbReference type="PROSITE" id="PS50115">
    <property type="entry name" value="ARFGAP"/>
    <property type="match status" value="1"/>
</dbReference>
<dbReference type="PROSITE" id="PS50030">
    <property type="entry name" value="UBA"/>
    <property type="match status" value="1"/>
</dbReference>
<name>GTS1_YEAST</name>
<protein>
    <recommendedName>
        <fullName>Protein GTS1</fullName>
    </recommendedName>
    <alternativeName>
        <fullName>Protein LSR1</fullName>
    </alternativeName>
</protein>
<feature type="chain" id="PRO_0000074226" description="Protein GTS1">
    <location>
        <begin position="1"/>
        <end position="396"/>
    </location>
</feature>
<feature type="domain" description="Arf-GAP" evidence="2">
    <location>
        <begin position="14"/>
        <end position="141"/>
    </location>
</feature>
<feature type="domain" description="UBA" evidence="1">
    <location>
        <begin position="193"/>
        <end position="234"/>
    </location>
</feature>
<feature type="zinc finger region" description="C4-type" evidence="2">
    <location>
        <begin position="30"/>
        <end position="53"/>
    </location>
</feature>
<feature type="region of interest" description="Disordered" evidence="3">
    <location>
        <begin position="148"/>
        <end position="194"/>
    </location>
</feature>
<feature type="region of interest" description="Disordered" evidence="3">
    <location>
        <begin position="233"/>
        <end position="266"/>
    </location>
</feature>
<feature type="compositionally biased region" description="Basic and acidic residues" evidence="3">
    <location>
        <begin position="148"/>
        <end position="161"/>
    </location>
</feature>
<feature type="compositionally biased region" description="Low complexity" evidence="3">
    <location>
        <begin position="234"/>
        <end position="249"/>
    </location>
</feature>
<feature type="modified residue" description="Phosphoserine" evidence="7 8">
    <location>
        <position position="153"/>
    </location>
</feature>
<feature type="modified residue" description="Phosphotyrosine" evidence="8">
    <location>
        <position position="181"/>
    </location>
</feature>
<feature type="modified residue" description="Phosphoserine" evidence="6">
    <location>
        <position position="184"/>
    </location>
</feature>
<feature type="modified residue" description="Phosphoserine" evidence="8">
    <location>
        <position position="187"/>
    </location>
</feature>
<feature type="modified residue" description="Phosphoserine" evidence="8">
    <location>
        <position position="240"/>
    </location>
</feature>
<feature type="modified residue" description="Phosphothreonine" evidence="8">
    <location>
        <position position="249"/>
    </location>
</feature>
<organism>
    <name type="scientific">Saccharomyces cerevisiae (strain ATCC 204508 / S288c)</name>
    <name type="common">Baker's yeast</name>
    <dbReference type="NCBI Taxonomy" id="559292"/>
    <lineage>
        <taxon>Eukaryota</taxon>
        <taxon>Fungi</taxon>
        <taxon>Dikarya</taxon>
        <taxon>Ascomycota</taxon>
        <taxon>Saccharomycotina</taxon>
        <taxon>Saccharomycetes</taxon>
        <taxon>Saccharomycetales</taxon>
        <taxon>Saccharomycetaceae</taxon>
        <taxon>Saccharomyces</taxon>
    </lineage>
</organism>
<evidence type="ECO:0000255" key="1">
    <source>
        <dbReference type="PROSITE-ProRule" id="PRU00212"/>
    </source>
</evidence>
<evidence type="ECO:0000255" key="2">
    <source>
        <dbReference type="PROSITE-ProRule" id="PRU00288"/>
    </source>
</evidence>
<evidence type="ECO:0000256" key="3">
    <source>
        <dbReference type="SAM" id="MobiDB-lite"/>
    </source>
</evidence>
<evidence type="ECO:0000269" key="4">
    <source>
    </source>
</evidence>
<evidence type="ECO:0000305" key="5"/>
<evidence type="ECO:0007744" key="6">
    <source>
    </source>
</evidence>
<evidence type="ECO:0007744" key="7">
    <source>
    </source>
</evidence>
<evidence type="ECO:0007744" key="8">
    <source>
    </source>
</evidence>
<comment type="function">
    <text>Appears to modulate the timing of budding to obtain an appropriate cell size independent of the DNA replication cycle. Transcription factor involved in both heat resistance and flocculation.</text>
</comment>
<comment type="interaction">
    <interactant intactId="EBI-7968">
        <id>P40956</id>
    </interactant>
    <interactant intactId="EBI-22980">
        <id>P43603</id>
        <label>LSB3</label>
    </interactant>
    <organismsDiffer>false</organismsDiffer>
    <experiments>4</experiments>
</comment>
<comment type="interaction">
    <interactant intactId="EBI-7968">
        <id>P40956</id>
    </interactant>
    <interactant intactId="EBI-14500">
        <id>P39743</id>
        <label>RVS167</label>
    </interactant>
    <organismsDiffer>false</organismsDiffer>
    <experiments>4</experiments>
</comment>
<comment type="interaction">
    <interactant intactId="EBI-7968">
        <id>P40956</id>
    </interactant>
    <interactant intactId="EBI-24460">
        <id>P32793</id>
        <label>YSC84</label>
    </interactant>
    <organismsDiffer>false</organismsDiffer>
    <experiments>4</experiments>
</comment>
<comment type="subcellular location">
    <subcellularLocation>
        <location evidence="5">Nucleus</location>
    </subcellularLocation>
</comment>
<comment type="miscellaneous">
    <text evidence="4">Present with 937 molecules/cell in log phase SD medium.</text>
</comment>
<accession>P40956</accession>
<accession>D6VTX2</accession>